<accession>Q6AP82</accession>
<reference key="1">
    <citation type="journal article" date="2004" name="Environ. Microbiol.">
        <title>The genome of Desulfotalea psychrophila, a sulfate-reducing bacterium from permanently cold Arctic sediments.</title>
        <authorList>
            <person name="Rabus R."/>
            <person name="Ruepp A."/>
            <person name="Frickey T."/>
            <person name="Rattei T."/>
            <person name="Fartmann B."/>
            <person name="Stark M."/>
            <person name="Bauer M."/>
            <person name="Zibat A."/>
            <person name="Lombardot T."/>
            <person name="Becker I."/>
            <person name="Amann J."/>
            <person name="Gellner K."/>
            <person name="Teeling H."/>
            <person name="Leuschner W.D."/>
            <person name="Gloeckner F.-O."/>
            <person name="Lupas A.N."/>
            <person name="Amann R."/>
            <person name="Klenk H.-P."/>
        </authorList>
    </citation>
    <scope>NUCLEOTIDE SEQUENCE [LARGE SCALE GENOMIC DNA]</scope>
    <source>
        <strain>DSM 12343 / LSv54</strain>
    </source>
</reference>
<proteinExistence type="inferred from homology"/>
<feature type="chain" id="PRO_0000104281" description="Large ribosomal subunit protein uL11">
    <location>
        <begin position="1"/>
        <end position="141"/>
    </location>
</feature>
<keyword id="KW-0488">Methylation</keyword>
<keyword id="KW-1185">Reference proteome</keyword>
<keyword id="KW-0687">Ribonucleoprotein</keyword>
<keyword id="KW-0689">Ribosomal protein</keyword>
<keyword id="KW-0694">RNA-binding</keyword>
<keyword id="KW-0699">rRNA-binding</keyword>
<evidence type="ECO:0000255" key="1">
    <source>
        <dbReference type="HAMAP-Rule" id="MF_00736"/>
    </source>
</evidence>
<evidence type="ECO:0000305" key="2"/>
<comment type="function">
    <text evidence="1">Forms part of the ribosomal stalk which helps the ribosome interact with GTP-bound translation factors.</text>
</comment>
<comment type="subunit">
    <text evidence="1">Part of the ribosomal stalk of the 50S ribosomal subunit. Interacts with L10 and the large rRNA to form the base of the stalk. L10 forms an elongated spine to which L12 dimers bind in a sequential fashion forming a multimeric L10(L12)X complex.</text>
</comment>
<comment type="PTM">
    <text evidence="1">One or more lysine residues are methylated.</text>
</comment>
<comment type="similarity">
    <text evidence="1">Belongs to the universal ribosomal protein uL11 family.</text>
</comment>
<organism>
    <name type="scientific">Desulfotalea psychrophila (strain LSv54 / DSM 12343)</name>
    <dbReference type="NCBI Taxonomy" id="177439"/>
    <lineage>
        <taxon>Bacteria</taxon>
        <taxon>Pseudomonadati</taxon>
        <taxon>Thermodesulfobacteriota</taxon>
        <taxon>Desulfobulbia</taxon>
        <taxon>Desulfobulbales</taxon>
        <taxon>Desulfocapsaceae</taxon>
        <taxon>Desulfotalea</taxon>
    </lineage>
</organism>
<name>RL11_DESPS</name>
<sequence>MAKKAMAYIKLQIPAGKANPSPPVGPALGQHGVNIMEFCKGFNARTQSMGDTIVPVVITVYQDRSFSFITKTPPAAVLLMKAANITKGSSNPKSERVAEISKEKIREIAEIKMPDLNAYDIDAAMLIIEGTARSAGITVVE</sequence>
<protein>
    <recommendedName>
        <fullName evidence="1">Large ribosomal subunit protein uL11</fullName>
    </recommendedName>
    <alternativeName>
        <fullName evidence="2">50S ribosomal protein L11</fullName>
    </alternativeName>
</protein>
<dbReference type="EMBL" id="CR522870">
    <property type="protein sequence ID" value="CAG35842.1"/>
    <property type="molecule type" value="Genomic_DNA"/>
</dbReference>
<dbReference type="RefSeq" id="WP_011188356.1">
    <property type="nucleotide sequence ID" value="NC_006138.1"/>
</dbReference>
<dbReference type="SMR" id="Q6AP82"/>
<dbReference type="STRING" id="177439.DP1113"/>
<dbReference type="KEGG" id="dps:DP1113"/>
<dbReference type="eggNOG" id="COG0080">
    <property type="taxonomic scope" value="Bacteria"/>
</dbReference>
<dbReference type="HOGENOM" id="CLU_074237_2_1_7"/>
<dbReference type="OrthoDB" id="9802408at2"/>
<dbReference type="Proteomes" id="UP000000602">
    <property type="component" value="Chromosome"/>
</dbReference>
<dbReference type="GO" id="GO:0022625">
    <property type="term" value="C:cytosolic large ribosomal subunit"/>
    <property type="evidence" value="ECO:0007669"/>
    <property type="project" value="TreeGrafter"/>
</dbReference>
<dbReference type="GO" id="GO:0070180">
    <property type="term" value="F:large ribosomal subunit rRNA binding"/>
    <property type="evidence" value="ECO:0007669"/>
    <property type="project" value="UniProtKB-UniRule"/>
</dbReference>
<dbReference type="GO" id="GO:0003735">
    <property type="term" value="F:structural constituent of ribosome"/>
    <property type="evidence" value="ECO:0007669"/>
    <property type="project" value="InterPro"/>
</dbReference>
<dbReference type="GO" id="GO:0006412">
    <property type="term" value="P:translation"/>
    <property type="evidence" value="ECO:0007669"/>
    <property type="project" value="UniProtKB-UniRule"/>
</dbReference>
<dbReference type="CDD" id="cd00349">
    <property type="entry name" value="Ribosomal_L11"/>
    <property type="match status" value="1"/>
</dbReference>
<dbReference type="FunFam" id="1.10.10.250:FF:000001">
    <property type="entry name" value="50S ribosomal protein L11"/>
    <property type="match status" value="1"/>
</dbReference>
<dbReference type="FunFam" id="3.30.1550.10:FF:000001">
    <property type="entry name" value="50S ribosomal protein L11"/>
    <property type="match status" value="1"/>
</dbReference>
<dbReference type="Gene3D" id="1.10.10.250">
    <property type="entry name" value="Ribosomal protein L11, C-terminal domain"/>
    <property type="match status" value="1"/>
</dbReference>
<dbReference type="Gene3D" id="3.30.1550.10">
    <property type="entry name" value="Ribosomal protein L11/L12, N-terminal domain"/>
    <property type="match status" value="1"/>
</dbReference>
<dbReference type="HAMAP" id="MF_00736">
    <property type="entry name" value="Ribosomal_uL11"/>
    <property type="match status" value="1"/>
</dbReference>
<dbReference type="InterPro" id="IPR000911">
    <property type="entry name" value="Ribosomal_uL11"/>
</dbReference>
<dbReference type="InterPro" id="IPR006519">
    <property type="entry name" value="Ribosomal_uL11_bac-typ"/>
</dbReference>
<dbReference type="InterPro" id="IPR020783">
    <property type="entry name" value="Ribosomal_uL11_C"/>
</dbReference>
<dbReference type="InterPro" id="IPR036769">
    <property type="entry name" value="Ribosomal_uL11_C_sf"/>
</dbReference>
<dbReference type="InterPro" id="IPR020784">
    <property type="entry name" value="Ribosomal_uL11_N"/>
</dbReference>
<dbReference type="InterPro" id="IPR036796">
    <property type="entry name" value="Ribosomal_uL11_N_sf"/>
</dbReference>
<dbReference type="NCBIfam" id="TIGR01632">
    <property type="entry name" value="L11_bact"/>
    <property type="match status" value="1"/>
</dbReference>
<dbReference type="PANTHER" id="PTHR11661">
    <property type="entry name" value="60S RIBOSOMAL PROTEIN L12"/>
    <property type="match status" value="1"/>
</dbReference>
<dbReference type="PANTHER" id="PTHR11661:SF1">
    <property type="entry name" value="LARGE RIBOSOMAL SUBUNIT PROTEIN UL11M"/>
    <property type="match status" value="1"/>
</dbReference>
<dbReference type="Pfam" id="PF00298">
    <property type="entry name" value="Ribosomal_L11"/>
    <property type="match status" value="1"/>
</dbReference>
<dbReference type="Pfam" id="PF03946">
    <property type="entry name" value="Ribosomal_L11_N"/>
    <property type="match status" value="1"/>
</dbReference>
<dbReference type="SMART" id="SM00649">
    <property type="entry name" value="RL11"/>
    <property type="match status" value="1"/>
</dbReference>
<dbReference type="SUPFAM" id="SSF54747">
    <property type="entry name" value="Ribosomal L11/L12e N-terminal domain"/>
    <property type="match status" value="1"/>
</dbReference>
<dbReference type="SUPFAM" id="SSF46906">
    <property type="entry name" value="Ribosomal protein L11, C-terminal domain"/>
    <property type="match status" value="1"/>
</dbReference>
<gene>
    <name evidence="1" type="primary">rplK</name>
    <name type="ordered locus">DP1113</name>
</gene>